<name>PLCB1_BOVIN</name>
<gene>
    <name type="primary">PLCB1</name>
</gene>
<proteinExistence type="evidence at protein level"/>
<organism>
    <name type="scientific">Bos taurus</name>
    <name type="common">Bovine</name>
    <dbReference type="NCBI Taxonomy" id="9913"/>
    <lineage>
        <taxon>Eukaryota</taxon>
        <taxon>Metazoa</taxon>
        <taxon>Chordata</taxon>
        <taxon>Craniata</taxon>
        <taxon>Vertebrata</taxon>
        <taxon>Euteleostomi</taxon>
        <taxon>Mammalia</taxon>
        <taxon>Eutheria</taxon>
        <taxon>Laurasiatheria</taxon>
        <taxon>Artiodactyla</taxon>
        <taxon>Ruminantia</taxon>
        <taxon>Pecora</taxon>
        <taxon>Bovidae</taxon>
        <taxon>Bovinae</taxon>
        <taxon>Bos</taxon>
    </lineage>
</organism>
<feature type="chain" id="PRO_0000088485" description="1-phosphatidylinositol 4,5-bisphosphate phosphodiesterase beta-1">
    <location>
        <begin position="1"/>
        <end position="1216"/>
    </location>
</feature>
<feature type="domain" description="PI-PLC X-box" evidence="5">
    <location>
        <begin position="316"/>
        <end position="467"/>
    </location>
</feature>
<feature type="domain" description="PI-PLC Y-box" evidence="6">
    <location>
        <begin position="540"/>
        <end position="656"/>
    </location>
</feature>
<feature type="domain" description="C2" evidence="4">
    <location>
        <begin position="656"/>
        <end position="784"/>
    </location>
</feature>
<feature type="region of interest" description="Disordered" evidence="7">
    <location>
        <begin position="469"/>
        <end position="534"/>
    </location>
</feature>
<feature type="region of interest" description="Disordered" evidence="7">
    <location>
        <begin position="834"/>
        <end position="891"/>
    </location>
</feature>
<feature type="region of interest" description="Disordered" evidence="7">
    <location>
        <begin position="933"/>
        <end position="993"/>
    </location>
</feature>
<feature type="region of interest" description="Disordered" evidence="7">
    <location>
        <begin position="1071"/>
        <end position="1095"/>
    </location>
</feature>
<feature type="region of interest" description="Disordered" evidence="7">
    <location>
        <begin position="1172"/>
        <end position="1216"/>
    </location>
</feature>
<feature type="compositionally biased region" description="Basic and acidic residues" evidence="7">
    <location>
        <begin position="472"/>
        <end position="483"/>
    </location>
</feature>
<feature type="compositionally biased region" description="Low complexity" evidence="7">
    <location>
        <begin position="491"/>
        <end position="501"/>
    </location>
</feature>
<feature type="compositionally biased region" description="Acidic residues" evidence="7">
    <location>
        <begin position="507"/>
        <end position="518"/>
    </location>
</feature>
<feature type="compositionally biased region" description="Basic and acidic residues" evidence="7">
    <location>
        <begin position="941"/>
        <end position="951"/>
    </location>
</feature>
<feature type="compositionally biased region" description="Basic and acidic residues" evidence="7">
    <location>
        <begin position="959"/>
        <end position="979"/>
    </location>
</feature>
<feature type="compositionally biased region" description="Polar residues" evidence="7">
    <location>
        <begin position="980"/>
        <end position="991"/>
    </location>
</feature>
<feature type="compositionally biased region" description="Basic and acidic residues" evidence="7">
    <location>
        <begin position="1075"/>
        <end position="1095"/>
    </location>
</feature>
<feature type="compositionally biased region" description="Polar residues" evidence="7">
    <location>
        <begin position="1187"/>
        <end position="1198"/>
    </location>
</feature>
<feature type="compositionally biased region" description="Basic and acidic residues" evidence="7">
    <location>
        <begin position="1207"/>
        <end position="1216"/>
    </location>
</feature>
<feature type="active site" evidence="5">
    <location>
        <position position="331"/>
    </location>
</feature>
<feature type="active site" evidence="5">
    <location>
        <position position="378"/>
    </location>
</feature>
<feature type="modified residue" description="Phosphoserine" evidence="3">
    <location>
        <position position="236"/>
    </location>
</feature>
<feature type="modified residue" description="Phosphoserine" evidence="3">
    <location>
        <position position="417"/>
    </location>
</feature>
<feature type="modified residue" description="Phosphothreonine" evidence="3">
    <location>
        <position position="509"/>
    </location>
</feature>
<feature type="modified residue" description="Phosphoserine" evidence="3">
    <location>
        <position position="511"/>
    </location>
</feature>
<feature type="modified residue" description="Phosphoserine" evidence="3">
    <location>
        <position position="582"/>
    </location>
</feature>
<feature type="modified residue" description="Phosphoserine; by PKC" evidence="8">
    <location>
        <position position="887"/>
    </location>
</feature>
<feature type="modified residue" description="Phosphoserine" evidence="3">
    <location>
        <position position="978"/>
    </location>
</feature>
<feature type="modified residue" description="Phosphoserine" evidence="3">
    <location>
        <position position="987"/>
    </location>
</feature>
<feature type="modified residue" description="Phosphoserine" evidence="3">
    <location>
        <position position="1199"/>
    </location>
</feature>
<feature type="modified residue" description="Phosphoserine" evidence="3">
    <location>
        <position position="1200"/>
    </location>
</feature>
<feature type="lipid moiety-binding region" description="S-palmitoyl cysteine" evidence="3">
    <location>
        <position position="17"/>
    </location>
</feature>
<dbReference type="EC" id="3.1.4.11"/>
<dbReference type="EMBL" id="J03137">
    <property type="protein sequence ID" value="AAA30702.1"/>
    <property type="molecule type" value="mRNA"/>
</dbReference>
<dbReference type="PIR" id="A28822">
    <property type="entry name" value="A28822"/>
</dbReference>
<dbReference type="RefSeq" id="NP_777242.1">
    <property type="nucleotide sequence ID" value="NM_174817.1"/>
</dbReference>
<dbReference type="SMR" id="P10894"/>
<dbReference type="BioGRID" id="160009">
    <property type="interactions" value="2"/>
</dbReference>
<dbReference type="FunCoup" id="P10894">
    <property type="interactions" value="2255"/>
</dbReference>
<dbReference type="MINT" id="P10894"/>
<dbReference type="STRING" id="9913.ENSBTAP00000046644"/>
<dbReference type="iPTMnet" id="P10894"/>
<dbReference type="PaxDb" id="9913-ENSBTAP00000046644"/>
<dbReference type="Ensembl" id="ENSBTAT00000078977.2">
    <property type="protein sequence ID" value="ENSBTAP00000058710.2"/>
    <property type="gene ID" value="ENSBTAG00000008338.7"/>
</dbReference>
<dbReference type="GeneID" id="287026"/>
<dbReference type="KEGG" id="bta:287026"/>
<dbReference type="CTD" id="23236"/>
<dbReference type="VEuPathDB" id="HostDB:ENSBTAG00000008338"/>
<dbReference type="VGNC" id="VGNC:32980">
    <property type="gene designation" value="PLCB1"/>
</dbReference>
<dbReference type="eggNOG" id="KOG1265">
    <property type="taxonomic scope" value="Eukaryota"/>
</dbReference>
<dbReference type="GeneTree" id="ENSGT00940000155428"/>
<dbReference type="HOGENOM" id="CLU_002738_2_0_1"/>
<dbReference type="InParanoid" id="P10894"/>
<dbReference type="OMA" id="PIVFKKX"/>
<dbReference type="OrthoDB" id="269822at2759"/>
<dbReference type="TreeFam" id="TF313216"/>
<dbReference type="Reactome" id="R-BTA-112043">
    <property type="pathway name" value="PLC beta mediated events"/>
</dbReference>
<dbReference type="Reactome" id="R-BTA-1855204">
    <property type="pathway name" value="Synthesis of IP3 and IP4 in the cytosol"/>
</dbReference>
<dbReference type="Reactome" id="R-BTA-399997">
    <property type="pathway name" value="Acetylcholine regulates insulin secretion"/>
</dbReference>
<dbReference type="Reactome" id="R-BTA-4086398">
    <property type="pathway name" value="Ca2+ pathway"/>
</dbReference>
<dbReference type="Reactome" id="R-BTA-416476">
    <property type="pathway name" value="G alpha (q) signalling events"/>
</dbReference>
<dbReference type="Reactome" id="R-BTA-418217">
    <property type="pathway name" value="G beta:gamma signalling through PLC beta"/>
</dbReference>
<dbReference type="Reactome" id="R-BTA-434316">
    <property type="pathway name" value="Fatty Acids bound to GPR40 (FFAR1) regulate insulin secretion"/>
</dbReference>
<dbReference type="Reactome" id="R-BTA-500657">
    <property type="pathway name" value="Presynaptic function of Kainate receptors"/>
</dbReference>
<dbReference type="SABIO-RK" id="P10894"/>
<dbReference type="Proteomes" id="UP000009136">
    <property type="component" value="Chromosome 13"/>
</dbReference>
<dbReference type="Bgee" id="ENSBTAG00000008338">
    <property type="expression patterns" value="Expressed in occipital lobe and 94 other cell types or tissues"/>
</dbReference>
<dbReference type="GO" id="GO:0005737">
    <property type="term" value="C:cytoplasm"/>
    <property type="evidence" value="ECO:0000250"/>
    <property type="project" value="AgBase"/>
</dbReference>
<dbReference type="GO" id="GO:0005829">
    <property type="term" value="C:cytosol"/>
    <property type="evidence" value="ECO:0000304"/>
    <property type="project" value="Reactome"/>
</dbReference>
<dbReference type="GO" id="GO:0031965">
    <property type="term" value="C:nuclear membrane"/>
    <property type="evidence" value="ECO:0007669"/>
    <property type="project" value="UniProtKB-SubCell"/>
</dbReference>
<dbReference type="GO" id="GO:0016607">
    <property type="term" value="C:nuclear speck"/>
    <property type="evidence" value="ECO:0000318"/>
    <property type="project" value="GO_Central"/>
</dbReference>
<dbReference type="GO" id="GO:0005509">
    <property type="term" value="F:calcium ion binding"/>
    <property type="evidence" value="ECO:0007669"/>
    <property type="project" value="InterPro"/>
</dbReference>
<dbReference type="GO" id="GO:0005516">
    <property type="term" value="F:calmodulin binding"/>
    <property type="evidence" value="ECO:0000318"/>
    <property type="project" value="GO_Central"/>
</dbReference>
<dbReference type="GO" id="GO:0019899">
    <property type="term" value="F:enzyme binding"/>
    <property type="evidence" value="ECO:0007669"/>
    <property type="project" value="Ensembl"/>
</dbReference>
<dbReference type="GO" id="GO:0005096">
    <property type="term" value="F:GTPase activator activity"/>
    <property type="evidence" value="ECO:0007669"/>
    <property type="project" value="Ensembl"/>
</dbReference>
<dbReference type="GO" id="GO:0005546">
    <property type="term" value="F:phosphatidylinositol-4,5-bisphosphate binding"/>
    <property type="evidence" value="ECO:0007669"/>
    <property type="project" value="Ensembl"/>
</dbReference>
<dbReference type="GO" id="GO:0004435">
    <property type="term" value="F:phosphatidylinositol-4,5-bisphosphate phospholipase C activity"/>
    <property type="evidence" value="ECO:0000315"/>
    <property type="project" value="AgBase"/>
</dbReference>
<dbReference type="GO" id="GO:0007186">
    <property type="term" value="P:G protein-coupled receptor signaling pathway"/>
    <property type="evidence" value="ECO:0000318"/>
    <property type="project" value="GO_Central"/>
</dbReference>
<dbReference type="GO" id="GO:0070498">
    <property type="term" value="P:interleukin-1-mediated signaling pathway"/>
    <property type="evidence" value="ECO:0007669"/>
    <property type="project" value="Ensembl"/>
</dbReference>
<dbReference type="GO" id="GO:0035722">
    <property type="term" value="P:interleukin-12-mediated signaling pathway"/>
    <property type="evidence" value="ECO:0007669"/>
    <property type="project" value="Ensembl"/>
</dbReference>
<dbReference type="GO" id="GO:0035723">
    <property type="term" value="P:interleukin-15-mediated signaling pathway"/>
    <property type="evidence" value="ECO:0007669"/>
    <property type="project" value="Ensembl"/>
</dbReference>
<dbReference type="GO" id="GO:0016042">
    <property type="term" value="P:lipid catabolic process"/>
    <property type="evidence" value="ECO:0007669"/>
    <property type="project" value="UniProtKB-KW"/>
</dbReference>
<dbReference type="GO" id="GO:0007613">
    <property type="term" value="P:memory"/>
    <property type="evidence" value="ECO:0000318"/>
    <property type="project" value="GO_Central"/>
</dbReference>
<dbReference type="GO" id="GO:0046488">
    <property type="term" value="P:phosphatidylinositol metabolic process"/>
    <property type="evidence" value="ECO:0000318"/>
    <property type="project" value="GO_Central"/>
</dbReference>
<dbReference type="GO" id="GO:0048015">
    <property type="term" value="P:phosphatidylinositol-mediated signaling"/>
    <property type="evidence" value="ECO:0000318"/>
    <property type="project" value="GO_Central"/>
</dbReference>
<dbReference type="GO" id="GO:0046330">
    <property type="term" value="P:positive regulation of JNK cascade"/>
    <property type="evidence" value="ECO:0007669"/>
    <property type="project" value="Ensembl"/>
</dbReference>
<dbReference type="GO" id="GO:0051209">
    <property type="term" value="P:release of sequestered calcium ion into cytosol"/>
    <property type="evidence" value="ECO:0000318"/>
    <property type="project" value="GO_Central"/>
</dbReference>
<dbReference type="CDD" id="cd00275">
    <property type="entry name" value="C2_PLC_like"/>
    <property type="match status" value="1"/>
</dbReference>
<dbReference type="CDD" id="cd16208">
    <property type="entry name" value="EFh_PI-PLCbeta1"/>
    <property type="match status" value="1"/>
</dbReference>
<dbReference type="CDD" id="cd13361">
    <property type="entry name" value="PH_PLC_beta"/>
    <property type="match status" value="1"/>
</dbReference>
<dbReference type="CDD" id="cd08591">
    <property type="entry name" value="PI-PLCc_beta"/>
    <property type="match status" value="1"/>
</dbReference>
<dbReference type="FunFam" id="1.10.238.10:FF:000048">
    <property type="entry name" value="1-phosphatidylinositol 4,5-bisphosphate phosphodiesterase"/>
    <property type="match status" value="1"/>
</dbReference>
<dbReference type="FunFam" id="1.20.1230.10:FF:000001">
    <property type="entry name" value="1-phosphatidylinositol 4,5-bisphosphate phosphodiesterase"/>
    <property type="match status" value="1"/>
</dbReference>
<dbReference type="FunFam" id="2.30.29.240:FF:000004">
    <property type="entry name" value="1-phosphatidylinositol 4,5-bisphosphate phosphodiesterase"/>
    <property type="match status" value="1"/>
</dbReference>
<dbReference type="FunFam" id="2.60.40.150:FF:000008">
    <property type="entry name" value="1-phosphatidylinositol 4,5-bisphosphate phosphodiesterase"/>
    <property type="match status" value="1"/>
</dbReference>
<dbReference type="FunFam" id="3.20.20.190:FF:000039">
    <property type="entry name" value="Phosphoinositide phospholipase C"/>
    <property type="match status" value="1"/>
</dbReference>
<dbReference type="Gene3D" id="2.30.29.240">
    <property type="match status" value="1"/>
</dbReference>
<dbReference type="Gene3D" id="2.60.40.150">
    <property type="entry name" value="C2 domain"/>
    <property type="match status" value="1"/>
</dbReference>
<dbReference type="Gene3D" id="1.10.238.10">
    <property type="entry name" value="EF-hand"/>
    <property type="match status" value="1"/>
</dbReference>
<dbReference type="Gene3D" id="3.20.20.190">
    <property type="entry name" value="Phosphatidylinositol (PI) phosphodiesterase"/>
    <property type="match status" value="1"/>
</dbReference>
<dbReference type="Gene3D" id="1.20.1230.10">
    <property type="entry name" value="Phospholipase C beta, distal C-terminal domain"/>
    <property type="match status" value="1"/>
</dbReference>
<dbReference type="InterPro" id="IPR000008">
    <property type="entry name" value="C2_dom"/>
</dbReference>
<dbReference type="InterPro" id="IPR035892">
    <property type="entry name" value="C2_domain_sf"/>
</dbReference>
<dbReference type="InterPro" id="IPR011992">
    <property type="entry name" value="EF-hand-dom_pair"/>
</dbReference>
<dbReference type="InterPro" id="IPR001192">
    <property type="entry name" value="PI-PLC_fam"/>
</dbReference>
<dbReference type="InterPro" id="IPR016280">
    <property type="entry name" value="PLC-beta"/>
</dbReference>
<dbReference type="InterPro" id="IPR028400">
    <property type="entry name" value="PLC-beta1_EF"/>
</dbReference>
<dbReference type="InterPro" id="IPR014815">
    <property type="entry name" value="PLC-beta_C"/>
</dbReference>
<dbReference type="InterPro" id="IPR042531">
    <property type="entry name" value="PLC-beta_C_sf"/>
</dbReference>
<dbReference type="InterPro" id="IPR037862">
    <property type="entry name" value="PLC-beta_PH"/>
</dbReference>
<dbReference type="InterPro" id="IPR017946">
    <property type="entry name" value="PLC-like_Pdiesterase_TIM-brl"/>
</dbReference>
<dbReference type="InterPro" id="IPR053945">
    <property type="entry name" value="PLCB1-4-like_EFh"/>
</dbReference>
<dbReference type="InterPro" id="IPR000909">
    <property type="entry name" value="PLipase_C_PInositol-sp_X_dom"/>
</dbReference>
<dbReference type="InterPro" id="IPR001711">
    <property type="entry name" value="PLipase_C_Pinositol-sp_Y"/>
</dbReference>
<dbReference type="PANTHER" id="PTHR10336:SF12">
    <property type="entry name" value="1-PHOSPHATIDYLINOSITOL 4,5-BISPHOSPHATE PHOSPHODIESTERASE BETA-1"/>
    <property type="match status" value="1"/>
</dbReference>
<dbReference type="PANTHER" id="PTHR10336">
    <property type="entry name" value="PHOSPHOINOSITIDE-SPECIFIC PHOSPHOLIPASE C FAMILY PROTEIN"/>
    <property type="match status" value="1"/>
</dbReference>
<dbReference type="Pfam" id="PF17787">
    <property type="entry name" value="PH_14"/>
    <property type="match status" value="1"/>
</dbReference>
<dbReference type="Pfam" id="PF00388">
    <property type="entry name" value="PI-PLC-X"/>
    <property type="match status" value="1"/>
</dbReference>
<dbReference type="Pfam" id="PF00387">
    <property type="entry name" value="PI-PLC-Y"/>
    <property type="match status" value="1"/>
</dbReference>
<dbReference type="Pfam" id="PF08703">
    <property type="entry name" value="PLC-beta_C"/>
    <property type="match status" value="1"/>
</dbReference>
<dbReference type="Pfam" id="PF22631">
    <property type="entry name" value="PLCB1-4-like_EFh"/>
    <property type="match status" value="1"/>
</dbReference>
<dbReference type="PIRSF" id="PIRSF000956">
    <property type="entry name" value="PLC-beta"/>
    <property type="match status" value="1"/>
</dbReference>
<dbReference type="PRINTS" id="PR00390">
    <property type="entry name" value="PHPHLIPASEC"/>
</dbReference>
<dbReference type="SMART" id="SM00239">
    <property type="entry name" value="C2"/>
    <property type="match status" value="1"/>
</dbReference>
<dbReference type="SMART" id="SM00148">
    <property type="entry name" value="PLCXc"/>
    <property type="match status" value="1"/>
</dbReference>
<dbReference type="SMART" id="SM00149">
    <property type="entry name" value="PLCYc"/>
    <property type="match status" value="1"/>
</dbReference>
<dbReference type="SUPFAM" id="SSF69989">
    <property type="entry name" value="C-terminal domain of PLC-beta"/>
    <property type="match status" value="1"/>
</dbReference>
<dbReference type="SUPFAM" id="SSF49562">
    <property type="entry name" value="C2 domain (Calcium/lipid-binding domain, CaLB)"/>
    <property type="match status" value="1"/>
</dbReference>
<dbReference type="SUPFAM" id="SSF47473">
    <property type="entry name" value="EF-hand"/>
    <property type="match status" value="1"/>
</dbReference>
<dbReference type="SUPFAM" id="SSF50729">
    <property type="entry name" value="PH domain-like"/>
    <property type="match status" value="1"/>
</dbReference>
<dbReference type="SUPFAM" id="SSF51695">
    <property type="entry name" value="PLC-like phosphodiesterases"/>
    <property type="match status" value="1"/>
</dbReference>
<dbReference type="PROSITE" id="PS50004">
    <property type="entry name" value="C2"/>
    <property type="match status" value="1"/>
</dbReference>
<dbReference type="PROSITE" id="PS50007">
    <property type="entry name" value="PIPLC_X_DOMAIN"/>
    <property type="match status" value="1"/>
</dbReference>
<dbReference type="PROSITE" id="PS50008">
    <property type="entry name" value="PIPLC_Y_DOMAIN"/>
    <property type="match status" value="1"/>
</dbReference>
<protein>
    <recommendedName>
        <fullName>1-phosphatidylinositol 4,5-bisphosphate phosphodiesterase beta-1</fullName>
        <ecNumber>3.1.4.11</ecNumber>
    </recommendedName>
    <alternativeName>
        <fullName>PLC-154</fullName>
    </alternativeName>
    <alternativeName>
        <fullName>Phosphoinositide phospholipase C-beta-1</fullName>
    </alternativeName>
    <alternativeName>
        <fullName>Phospholipase C-beta-1</fullName>
        <shortName>PLC-beta-1</shortName>
    </alternativeName>
</protein>
<reference key="1">
    <citation type="journal article" date="1988" name="Cell">
        <title>Determination of the primary structure of PLC-154 demonstrates diversity of phosphoinositide-specific phospholipase C activities.</title>
        <authorList>
            <person name="Katan M."/>
            <person name="Kriz R.W."/>
            <person name="Totty N."/>
            <person name="Philp R."/>
            <person name="Meldrum E."/>
            <person name="Aldape R.A."/>
            <person name="Knopf J.L."/>
            <person name="Parker P.J."/>
        </authorList>
    </citation>
    <scope>NUCLEOTIDE SEQUENCE [MRNA]</scope>
    <scope>PARTIAL PROTEIN SEQUENCE</scope>
</reference>
<reference key="2">
    <citation type="journal article" date="1990" name="J. Biol. Chem.">
        <title>Feedback regulation of phospholipase C-beta by protein kinase C.</title>
        <authorList>
            <person name="Ryu S.H."/>
            <person name="Kim U.H."/>
            <person name="Wahl M.I."/>
            <person name="Brown A.B."/>
            <person name="Carpenter G."/>
            <person name="Huang K.P."/>
            <person name="Rhee S.G."/>
        </authorList>
    </citation>
    <scope>PROTEIN SEQUENCE OF 879-889</scope>
    <scope>PHOSPHORYLATION AT SER-887</scope>
</reference>
<accession>P10894</accession>
<evidence type="ECO:0000250" key="1">
    <source>
        <dbReference type="UniProtKB" id="P10687"/>
    </source>
</evidence>
<evidence type="ECO:0000250" key="2">
    <source>
        <dbReference type="UniProtKB" id="Q9NQ66"/>
    </source>
</evidence>
<evidence type="ECO:0000250" key="3">
    <source>
        <dbReference type="UniProtKB" id="Q9Z1B3"/>
    </source>
</evidence>
<evidence type="ECO:0000255" key="4">
    <source>
        <dbReference type="PROSITE-ProRule" id="PRU00041"/>
    </source>
</evidence>
<evidence type="ECO:0000255" key="5">
    <source>
        <dbReference type="PROSITE-ProRule" id="PRU00270"/>
    </source>
</evidence>
<evidence type="ECO:0000255" key="6">
    <source>
        <dbReference type="PROSITE-ProRule" id="PRU00271"/>
    </source>
</evidence>
<evidence type="ECO:0000256" key="7">
    <source>
        <dbReference type="SAM" id="MobiDB-lite"/>
    </source>
</evidence>
<evidence type="ECO:0000269" key="8">
    <source>
    </source>
</evidence>
<keyword id="KW-0106">Calcium</keyword>
<keyword id="KW-0963">Cytoplasm</keyword>
<keyword id="KW-0903">Direct protein sequencing</keyword>
<keyword id="KW-0378">Hydrolase</keyword>
<keyword id="KW-0442">Lipid degradation</keyword>
<keyword id="KW-0443">Lipid metabolism</keyword>
<keyword id="KW-0449">Lipoprotein</keyword>
<keyword id="KW-0472">Membrane</keyword>
<keyword id="KW-0539">Nucleus</keyword>
<keyword id="KW-0564">Palmitate</keyword>
<keyword id="KW-0597">Phosphoprotein</keyword>
<keyword id="KW-1185">Reference proteome</keyword>
<keyword id="KW-0807">Transducer</keyword>
<comment type="function">
    <text evidence="3">Catalyzes the hydrolysis of 1-phosphatidylinositol 4,5-bisphosphate into diacylglycerol (DAG) and inositol 1,4,5-trisphosphate (IP3) and mediates intracellular signaling downstream of G protein-coupled receptors. Regulates the function of the endothelial barrier.</text>
</comment>
<comment type="catalytic activity">
    <reaction evidence="1">
        <text>a 1,2-diacyl-sn-glycero-3-phospho-(1D-myo-inositol-4,5-bisphosphate) + H2O = 1D-myo-inositol 1,4,5-trisphosphate + a 1,2-diacyl-sn-glycerol + H(+)</text>
        <dbReference type="Rhea" id="RHEA:33179"/>
        <dbReference type="ChEBI" id="CHEBI:15377"/>
        <dbReference type="ChEBI" id="CHEBI:15378"/>
        <dbReference type="ChEBI" id="CHEBI:17815"/>
        <dbReference type="ChEBI" id="CHEBI:58456"/>
        <dbReference type="ChEBI" id="CHEBI:203600"/>
        <dbReference type="EC" id="3.1.4.11"/>
    </reaction>
    <physiologicalReaction direction="left-to-right" evidence="1">
        <dbReference type="Rhea" id="RHEA:33180"/>
    </physiologicalReaction>
</comment>
<comment type="catalytic activity">
    <reaction evidence="1">
        <text>a 1,2-diacyl-sn-glycero-3-phospho-(1D-myo-inositol) + H2O = 1D-myo-inositol 1-phosphate + a 1,2-diacyl-sn-glycerol + H(+)</text>
        <dbReference type="Rhea" id="RHEA:43484"/>
        <dbReference type="ChEBI" id="CHEBI:15377"/>
        <dbReference type="ChEBI" id="CHEBI:15378"/>
        <dbReference type="ChEBI" id="CHEBI:17815"/>
        <dbReference type="ChEBI" id="CHEBI:57880"/>
        <dbReference type="ChEBI" id="CHEBI:58433"/>
    </reaction>
    <physiologicalReaction direction="left-to-right" evidence="1">
        <dbReference type="Rhea" id="RHEA:43485"/>
    </physiologicalReaction>
</comment>
<comment type="cofactor">
    <cofactor>
        <name>Ca(2+)</name>
        <dbReference type="ChEBI" id="CHEBI:29108"/>
    </cofactor>
</comment>
<comment type="subunit">
    <text evidence="2">Interacts with DGKQ.</text>
</comment>
<comment type="subcellular location">
    <subcellularLocation>
        <location evidence="3">Nucleus membrane</location>
    </subcellularLocation>
    <subcellularLocation>
        <location evidence="1">Cytoplasm</location>
    </subcellularLocation>
    <text evidence="3">Colocalizes with the adrenergic receptors, ADREN1A and ADREN1B, at the nuclear membrane of cardiac myocytes.</text>
</comment>
<comment type="PTM">
    <text evidence="3">Palmitoylated. Palmitoylation at Cys-17 by ZDHHC21 regulates the signaling activity of PLCB1 and the function of the endothelial barrier. Palmitoylation by ZDHHC21 is stimulated by inflammation.</text>
</comment>
<comment type="miscellaneous">
    <text>The receptor-mediated activation of PLC-beta-1 is mediated by two G-protein alpha subunits, alpha-Q and alpha-11.</text>
</comment>
<sequence>MAGAQPGVHALQLKPVCVSDSLKKGTKFVKWEDDSTVVTPIILRTDPQGFFFYWTDQNKETELLDLSLVKDARCGKHAKAPKDPKLRELLDVGNIGRLEHRMITVVYGPDLVNISHLNLVAFQEEVAKEWTNEVFSLATNLLAQNMSRDAFLEKAYTKLKLQVTPEGRIPLKNIYRLFSADRKRVETALEACSLPSSRNDSIPQEDFTPEVYRVFLNNLCPRPEIDNIFSEFGAKSKPYLTVDQMMDFINLKQRDPRLNEILYPPLKQEQVQVLIEKYEPNNSLAKKGQISVDGFMRYLSGEENGVVSPEKLDLNEDMSQPLSHYFINSSHNTYLTAGQLAGNSSVEMYRQVLLSGCRCVELDCWKGRTAEEEPVITHGFTMTTEISFKEVIEAIAECAFKTSPFPILLSFENHVDSPKQQAKMAEYCRLIFGDALLMEPLDKYPLESGVPLPSPMDLMYKILVKNKKKSHKSSEGSGKKKLSEQASNTYSDSSSVFEPSSPGAGEADTESDDDDDDDDCKKSSMDEGTAGSEAMATEEMSNLVNYIQPVKFESFEISKKRNRSFEMSSFVETKGLEQLTKSPVEFVEYNKMQLSRIYPKGTRVDSSNYMPQLFWNAGCQMVALNFQTVDLAMQINMGMYEYNGKSGYRLKPEFMRRPDKHFDPFTEGIVDGIVANTLSVKIISGQFLSDKKVGTYVEVDMFGLPVDTRRKAFKTKTSQGNAVNPIWEEEPIVFKKVVLPSLACLRIAVYEEGGKFIGHRILPVQAIRPGYHYICLRNERNQPLMLPALFVYIEVKDYVPDTYADVIEALSNPIRYVNLMEQRAKQLAALTLEDEEEVKKEADPGETPSEAPSEARPTPAENGVNHTTSLTPKPPSQALHSQPAPGSVKAPAKTEDLIQSVLTEVEAQTIEELKQQKSFVKLQKKHYKEMKDLVKRHHKKTTDLIKEHTTKYNEIQNDYLRRRAALEKTAKKDNKKKSEPSSPDHVSSTIEQDLAALDAEMTQKLVDLKDKQQQQLLNLRQEQYYSEKYQKREHIKLLIQKLTDVAEECQNNQLKKLKEICEKEKKELKKKMDKKRQEKITEAKSKDKSQMEEEKTEMIRSYIQEVVQYIKRLEEAQSKRQEKLVEKHKEIRQQILDEKPKLQVELEQEYQDKFKRLPLEILEFVQEAMKGKISEDSNHSSAPPLMTSDSGKLNQKPPSSEELEGENPGKEFDTPL</sequence>